<protein>
    <recommendedName>
        <fullName evidence="1">Ribosome maturation factor RimP</fullName>
    </recommendedName>
</protein>
<feature type="chain" id="PRO_0000384777" description="Ribosome maturation factor RimP">
    <location>
        <begin position="1"/>
        <end position="208"/>
    </location>
</feature>
<feature type="region of interest" description="Disordered" evidence="2">
    <location>
        <begin position="165"/>
        <end position="208"/>
    </location>
</feature>
<feature type="compositionally biased region" description="Basic and acidic residues" evidence="2">
    <location>
        <begin position="174"/>
        <end position="188"/>
    </location>
</feature>
<feature type="compositionally biased region" description="Basic and acidic residues" evidence="2">
    <location>
        <begin position="198"/>
        <end position="208"/>
    </location>
</feature>
<keyword id="KW-0963">Cytoplasm</keyword>
<keyword id="KW-1185">Reference proteome</keyword>
<keyword id="KW-0690">Ribosome biogenesis</keyword>
<gene>
    <name evidence="1" type="primary">rimP</name>
    <name type="ordered locus">sce5801</name>
</gene>
<reference key="1">
    <citation type="journal article" date="2007" name="Nat. Biotechnol.">
        <title>Complete genome sequence of the myxobacterium Sorangium cellulosum.</title>
        <authorList>
            <person name="Schneiker S."/>
            <person name="Perlova O."/>
            <person name="Kaiser O."/>
            <person name="Gerth K."/>
            <person name="Alici A."/>
            <person name="Altmeyer M.O."/>
            <person name="Bartels D."/>
            <person name="Bekel T."/>
            <person name="Beyer S."/>
            <person name="Bode E."/>
            <person name="Bode H.B."/>
            <person name="Bolten C.J."/>
            <person name="Choudhuri J.V."/>
            <person name="Doss S."/>
            <person name="Elnakady Y.A."/>
            <person name="Frank B."/>
            <person name="Gaigalat L."/>
            <person name="Goesmann A."/>
            <person name="Groeger C."/>
            <person name="Gross F."/>
            <person name="Jelsbak L."/>
            <person name="Jelsbak L."/>
            <person name="Kalinowski J."/>
            <person name="Kegler C."/>
            <person name="Knauber T."/>
            <person name="Konietzny S."/>
            <person name="Kopp M."/>
            <person name="Krause L."/>
            <person name="Krug D."/>
            <person name="Linke B."/>
            <person name="Mahmud T."/>
            <person name="Martinez-Arias R."/>
            <person name="McHardy A.C."/>
            <person name="Merai M."/>
            <person name="Meyer F."/>
            <person name="Mormann S."/>
            <person name="Munoz-Dorado J."/>
            <person name="Perez J."/>
            <person name="Pradella S."/>
            <person name="Rachid S."/>
            <person name="Raddatz G."/>
            <person name="Rosenau F."/>
            <person name="Rueckert C."/>
            <person name="Sasse F."/>
            <person name="Scharfe M."/>
            <person name="Schuster S.C."/>
            <person name="Suen G."/>
            <person name="Treuner-Lange A."/>
            <person name="Velicer G.J."/>
            <person name="Vorholter F.-J."/>
            <person name="Weissman K.J."/>
            <person name="Welch R.D."/>
            <person name="Wenzel S.C."/>
            <person name="Whitworth D.E."/>
            <person name="Wilhelm S."/>
            <person name="Wittmann C."/>
            <person name="Bloecker H."/>
            <person name="Puehler A."/>
            <person name="Mueller R."/>
        </authorList>
    </citation>
    <scope>NUCLEOTIDE SEQUENCE [LARGE SCALE GENOMIC DNA]</scope>
    <source>
        <strain>So ce56</strain>
    </source>
</reference>
<accession>A9G896</accession>
<sequence>MEPSTRAVFDLGRVRDAVAPVLASHGVTLVDLEWITERAGWTLRLTIERENADDAGGGVTLEDCADVSRDVSSVLDVEDLIPNHYNLEVSSPGLDRRLRTAAEFARFLGRTAKVKLARPAPDGQRLLRGELLEAPEGQVAVLVDGKRIAVPFADVAEARLVFELTAQPKKGQRQGKEPAKESGQKKQLAEAAPRSGSKRSERGSEKRK</sequence>
<evidence type="ECO:0000255" key="1">
    <source>
        <dbReference type="HAMAP-Rule" id="MF_01077"/>
    </source>
</evidence>
<evidence type="ECO:0000256" key="2">
    <source>
        <dbReference type="SAM" id="MobiDB-lite"/>
    </source>
</evidence>
<organism>
    <name type="scientific">Sorangium cellulosum (strain So ce56)</name>
    <name type="common">Polyangium cellulosum (strain So ce56)</name>
    <dbReference type="NCBI Taxonomy" id="448385"/>
    <lineage>
        <taxon>Bacteria</taxon>
        <taxon>Pseudomonadati</taxon>
        <taxon>Myxococcota</taxon>
        <taxon>Polyangia</taxon>
        <taxon>Polyangiales</taxon>
        <taxon>Polyangiaceae</taxon>
        <taxon>Sorangium</taxon>
    </lineage>
</organism>
<proteinExistence type="inferred from homology"/>
<name>RIMP_SORC5</name>
<dbReference type="EMBL" id="AM746676">
    <property type="protein sequence ID" value="CAN95964.1"/>
    <property type="molecule type" value="Genomic_DNA"/>
</dbReference>
<dbReference type="RefSeq" id="WP_012238429.1">
    <property type="nucleotide sequence ID" value="NC_010162.1"/>
</dbReference>
<dbReference type="SMR" id="A9G896"/>
<dbReference type="STRING" id="448385.sce5801"/>
<dbReference type="KEGG" id="scl:sce5801"/>
<dbReference type="eggNOG" id="COG0779">
    <property type="taxonomic scope" value="Bacteria"/>
</dbReference>
<dbReference type="HOGENOM" id="CLU_070525_1_1_7"/>
<dbReference type="OrthoDB" id="9805006at2"/>
<dbReference type="BioCyc" id="SCEL448385:SCE_RS29810-MONOMER"/>
<dbReference type="Proteomes" id="UP000002139">
    <property type="component" value="Chromosome"/>
</dbReference>
<dbReference type="GO" id="GO:0005829">
    <property type="term" value="C:cytosol"/>
    <property type="evidence" value="ECO:0007669"/>
    <property type="project" value="TreeGrafter"/>
</dbReference>
<dbReference type="GO" id="GO:0000028">
    <property type="term" value="P:ribosomal small subunit assembly"/>
    <property type="evidence" value="ECO:0007669"/>
    <property type="project" value="TreeGrafter"/>
</dbReference>
<dbReference type="GO" id="GO:0006412">
    <property type="term" value="P:translation"/>
    <property type="evidence" value="ECO:0007669"/>
    <property type="project" value="TreeGrafter"/>
</dbReference>
<dbReference type="CDD" id="cd01734">
    <property type="entry name" value="YlxS_C"/>
    <property type="match status" value="1"/>
</dbReference>
<dbReference type="FunFam" id="3.30.300.70:FF:000001">
    <property type="entry name" value="Ribosome maturation factor RimP"/>
    <property type="match status" value="1"/>
</dbReference>
<dbReference type="Gene3D" id="2.30.30.180">
    <property type="entry name" value="Ribosome maturation factor RimP, C-terminal domain"/>
    <property type="match status" value="1"/>
</dbReference>
<dbReference type="Gene3D" id="3.30.300.70">
    <property type="entry name" value="RimP-like superfamily, N-terminal"/>
    <property type="match status" value="1"/>
</dbReference>
<dbReference type="HAMAP" id="MF_01077">
    <property type="entry name" value="RimP"/>
    <property type="match status" value="1"/>
</dbReference>
<dbReference type="InterPro" id="IPR003728">
    <property type="entry name" value="Ribosome_maturation_RimP"/>
</dbReference>
<dbReference type="InterPro" id="IPR028998">
    <property type="entry name" value="RimP_C"/>
</dbReference>
<dbReference type="InterPro" id="IPR036847">
    <property type="entry name" value="RimP_C_sf"/>
</dbReference>
<dbReference type="InterPro" id="IPR028989">
    <property type="entry name" value="RimP_N"/>
</dbReference>
<dbReference type="InterPro" id="IPR035956">
    <property type="entry name" value="RimP_N_sf"/>
</dbReference>
<dbReference type="PANTHER" id="PTHR33867">
    <property type="entry name" value="RIBOSOME MATURATION FACTOR RIMP"/>
    <property type="match status" value="1"/>
</dbReference>
<dbReference type="PANTHER" id="PTHR33867:SF1">
    <property type="entry name" value="RIBOSOME MATURATION FACTOR RIMP"/>
    <property type="match status" value="1"/>
</dbReference>
<dbReference type="Pfam" id="PF17384">
    <property type="entry name" value="DUF150_C"/>
    <property type="match status" value="1"/>
</dbReference>
<dbReference type="Pfam" id="PF02576">
    <property type="entry name" value="RimP_N"/>
    <property type="match status" value="1"/>
</dbReference>
<dbReference type="SUPFAM" id="SSF74942">
    <property type="entry name" value="YhbC-like, C-terminal domain"/>
    <property type="match status" value="1"/>
</dbReference>
<dbReference type="SUPFAM" id="SSF75420">
    <property type="entry name" value="YhbC-like, N-terminal domain"/>
    <property type="match status" value="1"/>
</dbReference>
<comment type="function">
    <text evidence="1">Required for maturation of 30S ribosomal subunits.</text>
</comment>
<comment type="subcellular location">
    <subcellularLocation>
        <location evidence="1">Cytoplasm</location>
    </subcellularLocation>
</comment>
<comment type="similarity">
    <text evidence="1">Belongs to the RimP family.</text>
</comment>